<keyword id="KW-0046">Antibiotic resistance</keyword>
<keyword id="KW-0997">Cell inner membrane</keyword>
<keyword id="KW-1003">Cell membrane</keyword>
<keyword id="KW-0472">Membrane</keyword>
<keyword id="KW-0812">Transmembrane</keyword>
<keyword id="KW-1133">Transmembrane helix</keyword>
<keyword id="KW-0813">Transport</keyword>
<accession>B7MTJ6</accession>
<dbReference type="EMBL" id="CU928162">
    <property type="protein sequence ID" value="CAR07410.1"/>
    <property type="molecule type" value="Genomic_DNA"/>
</dbReference>
<dbReference type="RefSeq" id="WP_000092206.1">
    <property type="nucleotide sequence ID" value="NC_011745.1"/>
</dbReference>
<dbReference type="SMR" id="B7MTJ6"/>
<dbReference type="GeneID" id="75203652"/>
<dbReference type="KEGG" id="ecq:ECED1_1209"/>
<dbReference type="HOGENOM" id="CLU_001265_60_2_6"/>
<dbReference type="Proteomes" id="UP000000748">
    <property type="component" value="Chromosome"/>
</dbReference>
<dbReference type="GO" id="GO:0005886">
    <property type="term" value="C:plasma membrane"/>
    <property type="evidence" value="ECO:0007669"/>
    <property type="project" value="UniProtKB-SubCell"/>
</dbReference>
<dbReference type="GO" id="GO:0022857">
    <property type="term" value="F:transmembrane transporter activity"/>
    <property type="evidence" value="ECO:0007669"/>
    <property type="project" value="UniProtKB-UniRule"/>
</dbReference>
<dbReference type="GO" id="GO:0046677">
    <property type="term" value="P:response to antibiotic"/>
    <property type="evidence" value="ECO:0007669"/>
    <property type="project" value="UniProtKB-KW"/>
</dbReference>
<dbReference type="CDD" id="cd17329">
    <property type="entry name" value="MFS_MdtH_MDR_like"/>
    <property type="match status" value="1"/>
</dbReference>
<dbReference type="FunFam" id="1.20.1250.20:FF:000039">
    <property type="entry name" value="Multidrug resistance protein MdtH"/>
    <property type="match status" value="1"/>
</dbReference>
<dbReference type="Gene3D" id="1.20.1250.20">
    <property type="entry name" value="MFS general substrate transporter like domains"/>
    <property type="match status" value="1"/>
</dbReference>
<dbReference type="HAMAP" id="MF_01529">
    <property type="entry name" value="MFS_MdtH"/>
    <property type="match status" value="1"/>
</dbReference>
<dbReference type="InterPro" id="IPR011701">
    <property type="entry name" value="MFS"/>
</dbReference>
<dbReference type="InterPro" id="IPR020846">
    <property type="entry name" value="MFS_dom"/>
</dbReference>
<dbReference type="InterPro" id="IPR036259">
    <property type="entry name" value="MFS_trans_sf"/>
</dbReference>
<dbReference type="InterPro" id="IPR050171">
    <property type="entry name" value="MFS_Transporters"/>
</dbReference>
<dbReference type="InterPro" id="IPR022855">
    <property type="entry name" value="Multidrug-R_MdtH"/>
</dbReference>
<dbReference type="NCBIfam" id="NF008650">
    <property type="entry name" value="PRK11646.1"/>
    <property type="match status" value="1"/>
</dbReference>
<dbReference type="PANTHER" id="PTHR23517:SF2">
    <property type="entry name" value="MULTIDRUG RESISTANCE PROTEIN MDTH"/>
    <property type="match status" value="1"/>
</dbReference>
<dbReference type="PANTHER" id="PTHR23517">
    <property type="entry name" value="RESISTANCE PROTEIN MDTM, PUTATIVE-RELATED-RELATED"/>
    <property type="match status" value="1"/>
</dbReference>
<dbReference type="Pfam" id="PF07690">
    <property type="entry name" value="MFS_1"/>
    <property type="match status" value="1"/>
</dbReference>
<dbReference type="SUPFAM" id="SSF103473">
    <property type="entry name" value="MFS general substrate transporter"/>
    <property type="match status" value="1"/>
</dbReference>
<dbReference type="PROSITE" id="PS50850">
    <property type="entry name" value="MFS"/>
    <property type="match status" value="1"/>
</dbReference>
<name>MDTH_ECO81</name>
<feature type="chain" id="PRO_1000185166" description="Multidrug resistance protein MdtH">
    <location>
        <begin position="1"/>
        <end position="402"/>
    </location>
</feature>
<feature type="topological domain" description="Cytoplasmic" evidence="1">
    <location>
        <begin position="1"/>
        <end position="12"/>
    </location>
</feature>
<feature type="transmembrane region" description="Helical" evidence="1">
    <location>
        <begin position="13"/>
        <end position="33"/>
    </location>
</feature>
<feature type="topological domain" description="Periplasmic" evidence="1">
    <location>
        <begin position="34"/>
        <end position="98"/>
    </location>
</feature>
<feature type="transmembrane region" description="Helical" evidence="1">
    <location>
        <begin position="99"/>
        <end position="116"/>
    </location>
</feature>
<feature type="topological domain" description="Cytoplasmic" evidence="1">
    <location>
        <begin position="117"/>
        <end position="138"/>
    </location>
</feature>
<feature type="transmembrane region" description="Helical" evidence="1">
    <location>
        <begin position="139"/>
        <end position="159"/>
    </location>
</feature>
<feature type="topological domain" description="Periplasmic" evidence="1">
    <location>
        <begin position="160"/>
        <end position="164"/>
    </location>
</feature>
<feature type="transmembrane region" description="Helical" evidence="1">
    <location>
        <begin position="165"/>
        <end position="185"/>
    </location>
</feature>
<feature type="topological domain" description="Cytoplasmic" evidence="1">
    <location>
        <begin position="186"/>
        <end position="213"/>
    </location>
</feature>
<feature type="transmembrane region" description="Helical" evidence="1">
    <location>
        <begin position="214"/>
        <end position="234"/>
    </location>
</feature>
<feature type="topological domain" description="Periplasmic" evidence="1">
    <location>
        <begin position="235"/>
        <end position="243"/>
    </location>
</feature>
<feature type="transmembrane region" description="Helical" evidence="1">
    <location>
        <begin position="244"/>
        <end position="264"/>
    </location>
</feature>
<feature type="topological domain" description="Cytoplasmic" evidence="1">
    <location>
        <begin position="265"/>
        <end position="276"/>
    </location>
</feature>
<feature type="transmembrane region" description="Helical" evidence="1">
    <location>
        <begin position="277"/>
        <end position="297"/>
    </location>
</feature>
<feature type="topological domain" description="Periplasmic" evidence="1">
    <location>
        <begin position="298"/>
        <end position="299"/>
    </location>
</feature>
<feature type="transmembrane region" description="Helical" evidence="1">
    <location>
        <begin position="300"/>
        <end position="320"/>
    </location>
</feature>
<feature type="topological domain" description="Cytoplasmic" evidence="1">
    <location>
        <begin position="321"/>
        <end position="339"/>
    </location>
</feature>
<feature type="transmembrane region" description="Helical" evidence="1">
    <location>
        <begin position="340"/>
        <end position="360"/>
    </location>
</feature>
<feature type="topological domain" description="Periplasmic" evidence="1">
    <location>
        <begin position="361"/>
        <end position="367"/>
    </location>
</feature>
<feature type="transmembrane region" description="Helical" evidence="1">
    <location>
        <begin position="368"/>
        <end position="388"/>
    </location>
</feature>
<feature type="topological domain" description="Cytoplasmic" evidence="1">
    <location>
        <begin position="389"/>
        <end position="402"/>
    </location>
</feature>
<evidence type="ECO:0000255" key="1">
    <source>
        <dbReference type="HAMAP-Rule" id="MF_01529"/>
    </source>
</evidence>
<sequence length="402" mass="44363">MSRVSQARNLGKYFLLIDNMLVVLGFFVVFPLISIRFVDQMGWAAVMVGIALGLRQFIQQGLGIFGGAIADRFGAKPMIVTGMLMRAAGFATMGIAHEPWLLWFSCLLSGLGGTLFDPPRSALVVKLIRPQQRGRFFSLLMMQDSAGAVIGALLGSWLLQYDFRLVCATGAVLFVLCAAFNAWLLPAWKLSTVRTPVREGMTRVMRDKRFVTYVLTLAGYYMLAVQVMLMLPIMVNDVAGAPSAVKWMYAIEACLSLTLLYPIARWSEKHFRLEHRLMAGLLIMSLSMMPVGMVSGLQQLFTLICLFYIGSIIAEPARETLSASLADARARGSYMGFSRLGLAIGGAIGYIGGGWLFDLGKSAHQPELPWMMLGIIGIFTFLALGWQFSQKRAARRLLERDA</sequence>
<gene>
    <name evidence="1" type="primary">mdtH</name>
    <name type="ordered locus">ECED1_1209</name>
</gene>
<reference key="1">
    <citation type="journal article" date="2009" name="PLoS Genet.">
        <title>Organised genome dynamics in the Escherichia coli species results in highly diverse adaptive paths.</title>
        <authorList>
            <person name="Touchon M."/>
            <person name="Hoede C."/>
            <person name="Tenaillon O."/>
            <person name="Barbe V."/>
            <person name="Baeriswyl S."/>
            <person name="Bidet P."/>
            <person name="Bingen E."/>
            <person name="Bonacorsi S."/>
            <person name="Bouchier C."/>
            <person name="Bouvet O."/>
            <person name="Calteau A."/>
            <person name="Chiapello H."/>
            <person name="Clermont O."/>
            <person name="Cruveiller S."/>
            <person name="Danchin A."/>
            <person name="Diard M."/>
            <person name="Dossat C."/>
            <person name="Karoui M.E."/>
            <person name="Frapy E."/>
            <person name="Garry L."/>
            <person name="Ghigo J.M."/>
            <person name="Gilles A.M."/>
            <person name="Johnson J."/>
            <person name="Le Bouguenec C."/>
            <person name="Lescat M."/>
            <person name="Mangenot S."/>
            <person name="Martinez-Jehanne V."/>
            <person name="Matic I."/>
            <person name="Nassif X."/>
            <person name="Oztas S."/>
            <person name="Petit M.A."/>
            <person name="Pichon C."/>
            <person name="Rouy Z."/>
            <person name="Ruf C.S."/>
            <person name="Schneider D."/>
            <person name="Tourret J."/>
            <person name="Vacherie B."/>
            <person name="Vallenet D."/>
            <person name="Medigue C."/>
            <person name="Rocha E.P.C."/>
            <person name="Denamur E."/>
        </authorList>
    </citation>
    <scope>NUCLEOTIDE SEQUENCE [LARGE SCALE GENOMIC DNA]</scope>
    <source>
        <strain>ED1a</strain>
    </source>
</reference>
<proteinExistence type="inferred from homology"/>
<organism>
    <name type="scientific">Escherichia coli O81 (strain ED1a)</name>
    <dbReference type="NCBI Taxonomy" id="585397"/>
    <lineage>
        <taxon>Bacteria</taxon>
        <taxon>Pseudomonadati</taxon>
        <taxon>Pseudomonadota</taxon>
        <taxon>Gammaproteobacteria</taxon>
        <taxon>Enterobacterales</taxon>
        <taxon>Enterobacteriaceae</taxon>
        <taxon>Escherichia</taxon>
    </lineage>
</organism>
<comment type="function">
    <text evidence="1">Confers resistance to norfloxacin and enoxacin.</text>
</comment>
<comment type="subcellular location">
    <subcellularLocation>
        <location evidence="1">Cell inner membrane</location>
        <topology evidence="1">Multi-pass membrane protein</topology>
    </subcellularLocation>
</comment>
<comment type="similarity">
    <text evidence="1">Belongs to the major facilitator superfamily. DHA1 family. MdtH (TC 2.A.1.2.21) subfamily.</text>
</comment>
<protein>
    <recommendedName>
        <fullName evidence="1">Multidrug resistance protein MdtH</fullName>
    </recommendedName>
</protein>